<sequence>MGQNLSTSNPLGFFPEHQLDPAFKANTNNPDWDFNPKKDYWPEATKVGAGAFGPGFTPPHGGLLGLSPQAQGILTTLPANPPPASTNRQSGRQPTPLSPPLRDTHPQAMQWNSTTFHQALQDPRVRGLYFPAGGSSSGTLNPVPNTASHISSVFSTTGDPAPNMENITSGFLGPLLVLQAGFFLLTKILTIPQSLDSWWTSLNFLGGAPVCLGQNSQSPTSNHSPTSCPPICPGYRWMCLRRFIIFLFILLLCLIFLLVLLDYQGMLPVCPLIPGSSTTSTGPCKTCTTPAQGTSLIPSCCCTKPSDGNCTCIPIPSSWAFAKFLWEWASVRFSWLSLLAPFVQWFAGLSPTVWLLAIWMMWYWGPNLYNILSPFIPLLPIFFCLWVYI</sequence>
<name>HBSAG_HBVCP</name>
<feature type="initiator methionine" description="Removed; by host" evidence="3">
    <location>
        <position position="1"/>
    </location>
</feature>
<feature type="chain" id="PRO_0000038113" description="Large envelope protein" evidence="3">
    <location>
        <begin position="2"/>
        <end position="389"/>
    </location>
</feature>
<feature type="topological domain" description="Intravirion; in internal conformation" evidence="3">
    <location>
        <begin position="2"/>
        <end position="242"/>
    </location>
</feature>
<feature type="topological domain" description="Virion surface; in external conformation" evidence="3">
    <location>
        <begin position="2"/>
        <end position="170"/>
    </location>
</feature>
<feature type="transmembrane region" description="Helical; Name=TM1; Note=In external conformation" evidence="3">
    <location>
        <begin position="171"/>
        <end position="191"/>
    </location>
</feature>
<feature type="topological domain" description="Intravirion; in external conformation" evidence="3">
    <location>
        <begin position="192"/>
        <end position="242"/>
    </location>
</feature>
<feature type="transmembrane region" description="Helical; Name=TM2" evidence="3">
    <location>
        <begin position="243"/>
        <end position="263"/>
    </location>
</feature>
<feature type="topological domain" description="Virion surface" evidence="3">
    <location>
        <begin position="264"/>
        <end position="337"/>
    </location>
</feature>
<feature type="transmembrane region" description="Helical" evidence="3">
    <location>
        <begin position="338"/>
        <end position="358"/>
    </location>
</feature>
<feature type="topological domain" description="Intravirion" evidence="3">
    <location>
        <begin position="359"/>
        <end position="364"/>
    </location>
</feature>
<feature type="transmembrane region" description="Helical; Name=TM3" evidence="3">
    <location>
        <begin position="365"/>
        <end position="387"/>
    </location>
</feature>
<feature type="topological domain" description="Virion surface" evidence="3">
    <location>
        <begin position="388"/>
        <end position="389"/>
    </location>
</feature>
<feature type="region of interest" description="Pre-S" evidence="3">
    <location>
        <begin position="2"/>
        <end position="163"/>
    </location>
</feature>
<feature type="region of interest" description="Pre-S1" evidence="3">
    <location>
        <begin position="2"/>
        <end position="108"/>
    </location>
</feature>
<feature type="region of interest" description="Disordered" evidence="4">
    <location>
        <begin position="75"/>
        <end position="107"/>
    </location>
</feature>
<feature type="region of interest" description="Pre-S2" evidence="3">
    <location>
        <begin position="109"/>
        <end position="163"/>
    </location>
</feature>
<feature type="compositionally biased region" description="Polar residues" evidence="4">
    <location>
        <begin position="85"/>
        <end position="95"/>
    </location>
</feature>
<feature type="lipid moiety-binding region" description="N-myristoyl glycine; by host" evidence="3">
    <location>
        <position position="2"/>
    </location>
</feature>
<feature type="glycosylation site" description="N-linked (GlcNAc...) asparagine; by host" evidence="3">
    <location>
        <position position="309"/>
    </location>
</feature>
<feature type="splice variant" id="VSP_031450" description="In isoform S." evidence="5">
    <location>
        <begin position="1"/>
        <end position="163"/>
    </location>
</feature>
<feature type="splice variant" id="VSP_031451" description="In isoform M." evidence="5">
    <location>
        <begin position="1"/>
        <end position="108"/>
    </location>
</feature>
<feature type="modified residue" description="N-acetylmethionine" evidence="1">
    <location sequence="P12911-2">
        <position position="1"/>
    </location>
</feature>
<keyword id="KW-0007">Acetylation</keyword>
<keyword id="KW-0024">Alternative initiation</keyword>
<keyword id="KW-0025">Alternative splicing</keyword>
<keyword id="KW-1166">Caveolin-mediated endocytosis of virus by host</keyword>
<keyword id="KW-1170">Fusion of virus membrane with host endosomal membrane</keyword>
<keyword id="KW-1168">Fusion of virus membrane with host membrane</keyword>
<keyword id="KW-0325">Glycoprotein</keyword>
<keyword id="KW-0945">Host-virus interaction</keyword>
<keyword id="KW-0449">Lipoprotein</keyword>
<keyword id="KW-0472">Membrane</keyword>
<keyword id="KW-0519">Myristate</keyword>
<keyword id="KW-0812">Transmembrane</keyword>
<keyword id="KW-1133">Transmembrane helix</keyword>
<keyword id="KW-1161">Viral attachment to host cell</keyword>
<keyword id="KW-0261">Viral envelope protein</keyword>
<keyword id="KW-1162">Viral penetration into host cytoplasm</keyword>
<keyword id="KW-0946">Virion</keyword>
<keyword id="KW-1164">Virus endocytosis by host</keyword>
<keyword id="KW-1160">Virus entry into host cell</keyword>
<evidence type="ECO:0000250" key="1">
    <source>
        <dbReference type="UniProtKB" id="P03138"/>
    </source>
</evidence>
<evidence type="ECO:0000250" key="2">
    <source>
        <dbReference type="UniProtKB" id="P03141"/>
    </source>
</evidence>
<evidence type="ECO:0000255" key="3">
    <source>
        <dbReference type="HAMAP-Rule" id="MF_04075"/>
    </source>
</evidence>
<evidence type="ECO:0000256" key="4">
    <source>
        <dbReference type="SAM" id="MobiDB-lite"/>
    </source>
</evidence>
<evidence type="ECO:0000305" key="5"/>
<accession>P12911</accession>
<proteinExistence type="inferred from homology"/>
<gene>
    <name evidence="3" type="primary">S</name>
</gene>
<comment type="function">
    <text evidence="3">The large envelope protein exists in two topological conformations, one which is termed 'external' or Le-HBsAg and the other 'internal' or Li-HBsAg. In its external conformation the protein attaches the virus to cell receptors and thereby initiating infection. This interaction determines the species specificity and liver tropism. This attachment induces virion internalization predominantly through caveolin-mediated endocytosis. The large envelope protein also assures fusion between virion membrane and endosomal membrane. In its internal conformation the protein plays a role in virion morphogenesis and mediates the contact with the nucleocapsid like a matrix protein.</text>
</comment>
<comment type="function">
    <text evidence="3">The middle envelope protein plays an important role in the budding of the virion. It is involved in the induction of budding in a nucleocapsid independent way. In this process the majority of envelope proteins bud to form subviral lipoprotein particles of 22 nm of diameter that do not contain a nucleocapsid.</text>
</comment>
<comment type="subunit">
    <molecule>Isoform L</molecule>
    <text evidence="2">In its internal form (Li-HBsAg), interacts with the capsid protein and with the isoform S. Interacts with host chaperone CANX.</text>
</comment>
<comment type="subunit">
    <molecule>Isoform M</molecule>
    <text evidence="2">Associates with host chaperone CANX through its pre-S2 N glycan; this association may be essential for isoform M proper secretion.</text>
</comment>
<comment type="subunit">
    <molecule>Isoform S</molecule>
    <text evidence="2">Interacts with isoform L. Interacts with the antigens of satellite virus HDV (HDVAgs); this interaction is required for encapsidation of HDV genomic RNA.</text>
</comment>
<comment type="subcellular location">
    <subcellularLocation>
        <location evidence="3">Virion membrane</location>
    </subcellularLocation>
</comment>
<comment type="alternative products">
    <event type="alternative splicing"/>
    <event type="alternative initiation"/>
    <isoform>
        <id>P12911-1</id>
        <name>L</name>
        <name>Large envelope protein</name>
        <name>LHB</name>
        <name>L-HBsAg</name>
        <sequence type="displayed"/>
    </isoform>
    <isoform>
        <id>P12911-2</id>
        <name>M</name>
        <name>Middle envelope protein</name>
        <name>MHB</name>
        <name>M-HBsAg</name>
        <sequence type="described" ref="VSP_031451"/>
    </isoform>
    <isoform>
        <id>P12911-3</id>
        <name>S</name>
        <name>Small envelope protein</name>
        <name>SHB</name>
        <name>S-HBsAg</name>
        <sequence type="described" ref="VSP_031450"/>
    </isoform>
</comment>
<comment type="domain">
    <text evidence="3">The large envelope protein is synthesized with the pre-S region at the cytosolic side of the endoplasmic reticulum and, hence will be within the virion after budding. Therefore the pre-S region is not N-glycosylated. Later a post-translational translocation of N-terminal pre-S and TM1 domains occur in about 50% of proteins at the virion surface. These molecules change their topology by an unknown mechanism, resulting in exposure of pre-S region at virion surface. For isoform M in contrast, the pre-S2 region is translocated cotranslationally to the endoplasmic reticulum lumen and is N-glycosylated.</text>
</comment>
<comment type="PTM">
    <text evidence="1 3">Isoform M is N-terminally acetylated by host at a ratio of 90%, and N-glycosylated by host at the pre-S2 region.</text>
</comment>
<comment type="PTM">
    <text evidence="3">Myristoylated.</text>
</comment>
<comment type="similarity">
    <text evidence="3">Belongs to the orthohepadnavirus major surface antigen family.</text>
</comment>
<reference key="1">
    <citation type="journal article" date="1988" name="J. Gen. Virol.">
        <title>The complete nucleotide sequence of the genome of a hepatitis B virus isolated from a naturally infected chimpanzee.</title>
        <authorList>
            <person name="Vaudin M."/>
            <person name="Wolstenholme A.J."/>
            <person name="Tsiquaye K.N."/>
            <person name="Zuckerman A.J."/>
            <person name="Harrison T.J."/>
        </authorList>
    </citation>
    <scope>NUCLEOTIDE SEQUENCE [GENOMIC DNA]</scope>
</reference>
<reference key="2">
    <citation type="journal article" date="1996" name="Intervirology">
        <title>Functions of the large hepatitis B virus surface protein in viral particle morphogenesis.</title>
        <authorList>
            <person name="Bruss V."/>
            <person name="Gerhardt E."/>
            <person name="Vieluf K."/>
            <person name="Wunderlich G."/>
        </authorList>
    </citation>
    <scope>REVIEW</scope>
</reference>
<reference key="3">
    <citation type="journal article" date="1998" name="Adv. Exp. Med. Biol.">
        <title>Role of glycan processing in hepatitis B virus envelope protein trafficking.</title>
        <authorList>
            <person name="Block T.M."/>
            <person name="Lu X."/>
            <person name="Mehta A."/>
            <person name="Park J."/>
            <person name="Blumberg B.S."/>
            <person name="Dwek R."/>
        </authorList>
    </citation>
    <scope>REVIEW</scope>
</reference>
<reference key="4">
    <citation type="journal article" date="2004" name="Virus Res.">
        <title>Envelopment of the hepatitis B virus nucleocapsid.</title>
        <authorList>
            <person name="Bruss V."/>
        </authorList>
    </citation>
    <scope>REVIEW</scope>
</reference>
<reference key="5">
    <citation type="journal article" date="2006" name="Cancer Sci.">
        <title>Hepatitis B virus pre-S mutants, endoplasmic reticulum stress and hepatocarcinogenesis.</title>
        <authorList>
            <person name="Wang H.C."/>
            <person name="Huang W."/>
            <person name="Lai M.D."/>
            <person name="Su I.J."/>
        </authorList>
    </citation>
    <scope>REVIEW</scope>
</reference>
<organismHost>
    <name type="scientific">Pan troglodytes</name>
    <name type="common">Chimpanzee</name>
    <dbReference type="NCBI Taxonomy" id="9598"/>
</organismHost>
<protein>
    <recommendedName>
        <fullName evidence="3">Large envelope protein</fullName>
    </recommendedName>
    <alternativeName>
        <fullName evidence="3">L glycoprotein</fullName>
    </alternativeName>
    <alternativeName>
        <fullName evidence="3">L-HBsAg</fullName>
        <shortName evidence="3">LHB</shortName>
    </alternativeName>
    <alternativeName>
        <fullName evidence="3">Large S protein</fullName>
    </alternativeName>
    <alternativeName>
        <fullName evidence="3">Large surface protein</fullName>
    </alternativeName>
    <alternativeName>
        <fullName evidence="3">Major surface antigen</fullName>
    </alternativeName>
</protein>
<dbReference type="EMBL" id="D00220">
    <property type="protein sequence ID" value="BAA00159.1"/>
    <property type="molecule type" value="Genomic_DNA"/>
</dbReference>
<dbReference type="PIR" id="C28885">
    <property type="entry name" value="SAVLCP"/>
</dbReference>
<dbReference type="SMR" id="P12911"/>
<dbReference type="GlyCosmos" id="P12911">
    <property type="glycosylation" value="1 site, No reported glycans"/>
</dbReference>
<dbReference type="Proteomes" id="UP000007928">
    <property type="component" value="Segment"/>
</dbReference>
<dbReference type="GO" id="GO:0016020">
    <property type="term" value="C:membrane"/>
    <property type="evidence" value="ECO:0007669"/>
    <property type="project" value="UniProtKB-UniRule"/>
</dbReference>
<dbReference type="GO" id="GO:0019031">
    <property type="term" value="C:viral envelope"/>
    <property type="evidence" value="ECO:0007669"/>
    <property type="project" value="UniProtKB-KW"/>
</dbReference>
<dbReference type="GO" id="GO:0055036">
    <property type="term" value="C:virion membrane"/>
    <property type="evidence" value="ECO:0007669"/>
    <property type="project" value="UniProtKB-SubCell"/>
</dbReference>
<dbReference type="GO" id="GO:0075513">
    <property type="term" value="P:caveolin-mediated endocytosis of virus by host cell"/>
    <property type="evidence" value="ECO:0007669"/>
    <property type="project" value="UniProtKB-KW"/>
</dbReference>
<dbReference type="GO" id="GO:0039654">
    <property type="term" value="P:fusion of virus membrane with host endosome membrane"/>
    <property type="evidence" value="ECO:0007669"/>
    <property type="project" value="UniProtKB-KW"/>
</dbReference>
<dbReference type="GO" id="GO:0019062">
    <property type="term" value="P:virion attachment to host cell"/>
    <property type="evidence" value="ECO:0007669"/>
    <property type="project" value="UniProtKB-UniRule"/>
</dbReference>
<dbReference type="HAMAP" id="MF_04075">
    <property type="entry name" value="HBV_HBSAG"/>
    <property type="match status" value="1"/>
</dbReference>
<dbReference type="InterPro" id="IPR000349">
    <property type="entry name" value="HBV_HBSAG"/>
</dbReference>
<dbReference type="Pfam" id="PF00695">
    <property type="entry name" value="vMSA"/>
    <property type="match status" value="1"/>
</dbReference>
<organism>
    <name type="scientific">Chimpanzee hepatitis B virus (isolate United Kingdom/LSH/1988)</name>
    <name type="common">HBVcpz</name>
    <dbReference type="NCBI Taxonomy" id="10414"/>
    <lineage>
        <taxon>Viruses</taxon>
        <taxon>Riboviria</taxon>
        <taxon>Pararnavirae</taxon>
        <taxon>Artverviricota</taxon>
        <taxon>Revtraviricetes</taxon>
        <taxon>Blubervirales</taxon>
        <taxon>Hepadnaviridae</taxon>
        <taxon>Orthohepadnavirus</taxon>
        <taxon>Hepatitis B virus</taxon>
    </lineage>
</organism>